<feature type="chain" id="PRO_0000428169" description="Uridylate kinase">
    <location>
        <begin position="1"/>
        <end position="261"/>
    </location>
</feature>
<feature type="region of interest" description="Disordered" evidence="2">
    <location>
        <begin position="1"/>
        <end position="23"/>
    </location>
</feature>
<feature type="binding site" evidence="1">
    <location>
        <begin position="36"/>
        <end position="39"/>
    </location>
    <ligand>
        <name>ATP</name>
        <dbReference type="ChEBI" id="CHEBI:30616"/>
    </ligand>
</feature>
<feature type="binding site" evidence="1">
    <location>
        <position position="77"/>
    </location>
    <ligand>
        <name>UMP</name>
        <dbReference type="ChEBI" id="CHEBI:57865"/>
    </ligand>
</feature>
<feature type="binding site" evidence="1">
    <location>
        <position position="78"/>
    </location>
    <ligand>
        <name>ATP</name>
        <dbReference type="ChEBI" id="CHEBI:30616"/>
    </ligand>
</feature>
<feature type="binding site" evidence="1">
    <location>
        <position position="82"/>
    </location>
    <ligand>
        <name>ATP</name>
        <dbReference type="ChEBI" id="CHEBI:30616"/>
    </ligand>
</feature>
<feature type="binding site" evidence="1">
    <location>
        <position position="97"/>
    </location>
    <ligand>
        <name>UMP</name>
        <dbReference type="ChEBI" id="CHEBI:57865"/>
    </ligand>
</feature>
<feature type="binding site" evidence="1">
    <location>
        <begin position="158"/>
        <end position="165"/>
    </location>
    <ligand>
        <name>UMP</name>
        <dbReference type="ChEBI" id="CHEBI:57865"/>
    </ligand>
</feature>
<feature type="binding site" evidence="1">
    <location>
        <position position="191"/>
    </location>
    <ligand>
        <name>ATP</name>
        <dbReference type="ChEBI" id="CHEBI:30616"/>
    </ligand>
</feature>
<feature type="binding site" evidence="1">
    <location>
        <position position="194"/>
    </location>
    <ligand>
        <name>ATP</name>
        <dbReference type="ChEBI" id="CHEBI:30616"/>
    </ligand>
</feature>
<dbReference type="EC" id="2.7.4.22" evidence="1"/>
<dbReference type="EMBL" id="AE000516">
    <property type="protein sequence ID" value="AAK47276.1"/>
    <property type="status" value="ALT_INIT"/>
    <property type="molecule type" value="Genomic_DNA"/>
</dbReference>
<dbReference type="PIR" id="F70924">
    <property type="entry name" value="F70924"/>
</dbReference>
<dbReference type="RefSeq" id="WP_003414665.1">
    <property type="nucleotide sequence ID" value="NZ_KK341227.1"/>
</dbReference>
<dbReference type="SMR" id="P9WHK4"/>
<dbReference type="GeneID" id="45426871"/>
<dbReference type="KEGG" id="mtc:MT2951"/>
<dbReference type="PATRIC" id="fig|83331.31.peg.3188"/>
<dbReference type="HOGENOM" id="CLU_033861_0_0_11"/>
<dbReference type="UniPathway" id="UPA00159">
    <property type="reaction ID" value="UER00275"/>
</dbReference>
<dbReference type="Proteomes" id="UP000001020">
    <property type="component" value="Chromosome"/>
</dbReference>
<dbReference type="GO" id="GO:0005737">
    <property type="term" value="C:cytoplasm"/>
    <property type="evidence" value="ECO:0007669"/>
    <property type="project" value="UniProtKB-SubCell"/>
</dbReference>
<dbReference type="GO" id="GO:0005524">
    <property type="term" value="F:ATP binding"/>
    <property type="evidence" value="ECO:0007669"/>
    <property type="project" value="UniProtKB-KW"/>
</dbReference>
<dbReference type="GO" id="GO:0033862">
    <property type="term" value="F:UMP kinase activity"/>
    <property type="evidence" value="ECO:0007669"/>
    <property type="project" value="UniProtKB-EC"/>
</dbReference>
<dbReference type="GO" id="GO:0044210">
    <property type="term" value="P:'de novo' CTP biosynthetic process"/>
    <property type="evidence" value="ECO:0007669"/>
    <property type="project" value="UniProtKB-UniRule"/>
</dbReference>
<dbReference type="GO" id="GO:0006225">
    <property type="term" value="P:UDP biosynthetic process"/>
    <property type="evidence" value="ECO:0007669"/>
    <property type="project" value="TreeGrafter"/>
</dbReference>
<dbReference type="CDD" id="cd04254">
    <property type="entry name" value="AAK_UMPK-PyrH-Ec"/>
    <property type="match status" value="1"/>
</dbReference>
<dbReference type="FunFam" id="3.40.1160.10:FF:000001">
    <property type="entry name" value="Uridylate kinase"/>
    <property type="match status" value="1"/>
</dbReference>
<dbReference type="Gene3D" id="3.40.1160.10">
    <property type="entry name" value="Acetylglutamate kinase-like"/>
    <property type="match status" value="1"/>
</dbReference>
<dbReference type="HAMAP" id="MF_01220_B">
    <property type="entry name" value="PyrH_B"/>
    <property type="match status" value="1"/>
</dbReference>
<dbReference type="InterPro" id="IPR036393">
    <property type="entry name" value="AceGlu_kinase-like_sf"/>
</dbReference>
<dbReference type="InterPro" id="IPR001048">
    <property type="entry name" value="Asp/Glu/Uridylate_kinase"/>
</dbReference>
<dbReference type="InterPro" id="IPR011817">
    <property type="entry name" value="Uridylate_kinase"/>
</dbReference>
<dbReference type="InterPro" id="IPR015963">
    <property type="entry name" value="Uridylate_kinase_bac"/>
</dbReference>
<dbReference type="NCBIfam" id="TIGR02075">
    <property type="entry name" value="pyrH_bact"/>
    <property type="match status" value="1"/>
</dbReference>
<dbReference type="PANTHER" id="PTHR42833">
    <property type="entry name" value="URIDYLATE KINASE"/>
    <property type="match status" value="1"/>
</dbReference>
<dbReference type="PANTHER" id="PTHR42833:SF4">
    <property type="entry name" value="URIDYLATE KINASE PUMPKIN, CHLOROPLASTIC"/>
    <property type="match status" value="1"/>
</dbReference>
<dbReference type="Pfam" id="PF00696">
    <property type="entry name" value="AA_kinase"/>
    <property type="match status" value="1"/>
</dbReference>
<dbReference type="PIRSF" id="PIRSF005650">
    <property type="entry name" value="Uridylate_kin"/>
    <property type="match status" value="1"/>
</dbReference>
<dbReference type="SUPFAM" id="SSF53633">
    <property type="entry name" value="Carbamate kinase-like"/>
    <property type="match status" value="1"/>
</dbReference>
<organism>
    <name type="scientific">Mycobacterium tuberculosis (strain CDC 1551 / Oshkosh)</name>
    <dbReference type="NCBI Taxonomy" id="83331"/>
    <lineage>
        <taxon>Bacteria</taxon>
        <taxon>Bacillati</taxon>
        <taxon>Actinomycetota</taxon>
        <taxon>Actinomycetes</taxon>
        <taxon>Mycobacteriales</taxon>
        <taxon>Mycobacteriaceae</taxon>
        <taxon>Mycobacterium</taxon>
        <taxon>Mycobacterium tuberculosis complex</taxon>
    </lineage>
</organism>
<gene>
    <name evidence="1" type="primary">pyrH</name>
    <name type="ordered locus">MT2951</name>
</gene>
<protein>
    <recommendedName>
        <fullName evidence="1">Uridylate kinase</fullName>
        <shortName evidence="1">UK</shortName>
        <ecNumber evidence="1">2.7.4.22</ecNumber>
    </recommendedName>
    <alternativeName>
        <fullName evidence="1">Uridine monophosphate kinase</fullName>
        <shortName evidence="1">UMP kinase</shortName>
        <shortName evidence="1">UMPK</shortName>
    </alternativeName>
</protein>
<comment type="function">
    <text evidence="1">Catalyzes the reversible phosphorylation of UMP to UDP.</text>
</comment>
<comment type="catalytic activity">
    <reaction evidence="1">
        <text>UMP + ATP = UDP + ADP</text>
        <dbReference type="Rhea" id="RHEA:24400"/>
        <dbReference type="ChEBI" id="CHEBI:30616"/>
        <dbReference type="ChEBI" id="CHEBI:57865"/>
        <dbReference type="ChEBI" id="CHEBI:58223"/>
        <dbReference type="ChEBI" id="CHEBI:456216"/>
        <dbReference type="EC" id="2.7.4.22"/>
    </reaction>
</comment>
<comment type="activity regulation">
    <text evidence="1">Inhibited by UTP.</text>
</comment>
<comment type="pathway">
    <text evidence="1">Pyrimidine metabolism; CTP biosynthesis via de novo pathway; UDP from UMP (UMPK route): step 1/1.</text>
</comment>
<comment type="subunit">
    <text evidence="1">Homohexamer.</text>
</comment>
<comment type="subcellular location">
    <subcellularLocation>
        <location evidence="1">Cytoplasm</location>
    </subcellularLocation>
</comment>
<comment type="similarity">
    <text evidence="1">Belongs to the UMP kinase family.</text>
</comment>
<comment type="sequence caution" evidence="3">
    <conflict type="erroneous initiation">
        <sequence resource="EMBL-CDS" id="AAK47276"/>
    </conflict>
</comment>
<accession>P9WHK4</accession>
<accession>L0TAX5</accession>
<accession>P65929</accession>
<accession>Q10791</accession>
<reference key="1">
    <citation type="journal article" date="2002" name="J. Bacteriol.">
        <title>Whole-genome comparison of Mycobacterium tuberculosis clinical and laboratory strains.</title>
        <authorList>
            <person name="Fleischmann R.D."/>
            <person name="Alland D."/>
            <person name="Eisen J.A."/>
            <person name="Carpenter L."/>
            <person name="White O."/>
            <person name="Peterson J.D."/>
            <person name="DeBoy R.T."/>
            <person name="Dodson R.J."/>
            <person name="Gwinn M.L."/>
            <person name="Haft D.H."/>
            <person name="Hickey E.K."/>
            <person name="Kolonay J.F."/>
            <person name="Nelson W.C."/>
            <person name="Umayam L.A."/>
            <person name="Ermolaeva M.D."/>
            <person name="Salzberg S.L."/>
            <person name="Delcher A."/>
            <person name="Utterback T.R."/>
            <person name="Weidman J.F."/>
            <person name="Khouri H.M."/>
            <person name="Gill J."/>
            <person name="Mikula A."/>
            <person name="Bishai W."/>
            <person name="Jacobs W.R. Jr."/>
            <person name="Venter J.C."/>
            <person name="Fraser C.M."/>
        </authorList>
    </citation>
    <scope>NUCLEOTIDE SEQUENCE [LARGE SCALE GENOMIC DNA]</scope>
    <source>
        <strain>CDC 1551 / Oshkosh</strain>
    </source>
</reference>
<proteinExistence type="inferred from homology"/>
<evidence type="ECO:0000255" key="1">
    <source>
        <dbReference type="HAMAP-Rule" id="MF_01220"/>
    </source>
</evidence>
<evidence type="ECO:0000256" key="2">
    <source>
        <dbReference type="SAM" id="MobiDB-lite"/>
    </source>
</evidence>
<evidence type="ECO:0000305" key="3"/>
<keyword id="KW-0067">ATP-binding</keyword>
<keyword id="KW-0963">Cytoplasm</keyword>
<keyword id="KW-0418">Kinase</keyword>
<keyword id="KW-0547">Nucleotide-binding</keyword>
<keyword id="KW-0665">Pyrimidine biosynthesis</keyword>
<keyword id="KW-1185">Reference proteome</keyword>
<keyword id="KW-0808">Transferase</keyword>
<name>PYRH_MYCTO</name>
<sequence length="261" mass="27430">MTEPDVAGAPASKPEPASTGAASAAQLSGYSRVLLKLGGEMFGGGQVGLDPDVVAQVARQIADVVRGGVQIAVVIGGGNFFRGAQLQQLGMERTRSDYMGMLGTVMNSLALQDFLEKEGIVTRVQTAITMGQVAEPYLPLRAVRHLEKGRVVIFGAGMGLPYFSTDTTAAQRALEIGADVVLMAKAVDGVFAEDPRVNPEAELLTAVSHREVLDRGLRVADATAFSLCMDNGMPILVFNLLTDGNIARAVRGEKIGTLVTT</sequence>